<dbReference type="EC" id="2.7.4.3" evidence="1"/>
<dbReference type="EMBL" id="CP000725">
    <property type="protein sequence ID" value="ABV09489.1"/>
    <property type="molecule type" value="Genomic_DNA"/>
</dbReference>
<dbReference type="RefSeq" id="WP_012130961.1">
    <property type="nucleotide sequence ID" value="NC_009785.1"/>
</dbReference>
<dbReference type="SMR" id="A8AZK4"/>
<dbReference type="STRING" id="467705.SGO_1964"/>
<dbReference type="KEGG" id="sgo:SGO_1964"/>
<dbReference type="eggNOG" id="COG0563">
    <property type="taxonomic scope" value="Bacteria"/>
</dbReference>
<dbReference type="HOGENOM" id="CLU_032354_1_2_9"/>
<dbReference type="UniPathway" id="UPA00588">
    <property type="reaction ID" value="UER00649"/>
</dbReference>
<dbReference type="Proteomes" id="UP000001131">
    <property type="component" value="Chromosome"/>
</dbReference>
<dbReference type="GO" id="GO:0005737">
    <property type="term" value="C:cytoplasm"/>
    <property type="evidence" value="ECO:0007669"/>
    <property type="project" value="UniProtKB-SubCell"/>
</dbReference>
<dbReference type="GO" id="GO:0004017">
    <property type="term" value="F:adenylate kinase activity"/>
    <property type="evidence" value="ECO:0007669"/>
    <property type="project" value="UniProtKB-UniRule"/>
</dbReference>
<dbReference type="GO" id="GO:0005524">
    <property type="term" value="F:ATP binding"/>
    <property type="evidence" value="ECO:0007669"/>
    <property type="project" value="UniProtKB-UniRule"/>
</dbReference>
<dbReference type="GO" id="GO:0044209">
    <property type="term" value="P:AMP salvage"/>
    <property type="evidence" value="ECO:0007669"/>
    <property type="project" value="UniProtKB-UniRule"/>
</dbReference>
<dbReference type="CDD" id="cd01428">
    <property type="entry name" value="ADK"/>
    <property type="match status" value="1"/>
</dbReference>
<dbReference type="FunFam" id="3.40.50.300:FF:000106">
    <property type="entry name" value="Adenylate kinase mitochondrial"/>
    <property type="match status" value="1"/>
</dbReference>
<dbReference type="Gene3D" id="3.40.50.300">
    <property type="entry name" value="P-loop containing nucleotide triphosphate hydrolases"/>
    <property type="match status" value="1"/>
</dbReference>
<dbReference type="HAMAP" id="MF_00235">
    <property type="entry name" value="Adenylate_kinase_Adk"/>
    <property type="match status" value="1"/>
</dbReference>
<dbReference type="InterPro" id="IPR006259">
    <property type="entry name" value="Adenyl_kin_sub"/>
</dbReference>
<dbReference type="InterPro" id="IPR000850">
    <property type="entry name" value="Adenylat/UMP-CMP_kin"/>
</dbReference>
<dbReference type="InterPro" id="IPR033690">
    <property type="entry name" value="Adenylat_kinase_CS"/>
</dbReference>
<dbReference type="InterPro" id="IPR036193">
    <property type="entry name" value="ADK_active_lid_dom_sf"/>
</dbReference>
<dbReference type="InterPro" id="IPR027417">
    <property type="entry name" value="P-loop_NTPase"/>
</dbReference>
<dbReference type="NCBIfam" id="TIGR01351">
    <property type="entry name" value="adk"/>
    <property type="match status" value="1"/>
</dbReference>
<dbReference type="NCBIfam" id="NF001380">
    <property type="entry name" value="PRK00279.1-2"/>
    <property type="match status" value="1"/>
</dbReference>
<dbReference type="NCBIfam" id="NF001381">
    <property type="entry name" value="PRK00279.1-3"/>
    <property type="match status" value="1"/>
</dbReference>
<dbReference type="NCBIfam" id="NF001382">
    <property type="entry name" value="PRK00279.1-4"/>
    <property type="match status" value="1"/>
</dbReference>
<dbReference type="PANTHER" id="PTHR23359">
    <property type="entry name" value="NUCLEOTIDE KINASE"/>
    <property type="match status" value="1"/>
</dbReference>
<dbReference type="Pfam" id="PF00406">
    <property type="entry name" value="ADK"/>
    <property type="match status" value="1"/>
</dbReference>
<dbReference type="PRINTS" id="PR00094">
    <property type="entry name" value="ADENYLTKNASE"/>
</dbReference>
<dbReference type="SUPFAM" id="SSF57774">
    <property type="entry name" value="Microbial and mitochondrial ADK, insert 'zinc finger' domain"/>
    <property type="match status" value="1"/>
</dbReference>
<dbReference type="SUPFAM" id="SSF52540">
    <property type="entry name" value="P-loop containing nucleoside triphosphate hydrolases"/>
    <property type="match status" value="1"/>
</dbReference>
<dbReference type="PROSITE" id="PS00113">
    <property type="entry name" value="ADENYLATE_KINASE"/>
    <property type="match status" value="1"/>
</dbReference>
<protein>
    <recommendedName>
        <fullName evidence="1">Adenylate kinase</fullName>
        <shortName evidence="1">AK</shortName>
        <ecNumber evidence="1">2.7.4.3</ecNumber>
    </recommendedName>
    <alternativeName>
        <fullName evidence="1">ATP-AMP transphosphorylase</fullName>
    </alternativeName>
    <alternativeName>
        <fullName evidence="1">ATP:AMP phosphotransferase</fullName>
    </alternativeName>
    <alternativeName>
        <fullName evidence="1">Adenylate monophosphate kinase</fullName>
    </alternativeName>
</protein>
<accession>A8AZK4</accession>
<reference key="1">
    <citation type="journal article" date="2007" name="J. Bacteriol.">
        <title>Genome-wide transcriptional changes in Streptococcus gordonii in response to competence signaling peptide.</title>
        <authorList>
            <person name="Vickerman M.M."/>
            <person name="Iobst S."/>
            <person name="Jesionowski A.M."/>
            <person name="Gill S.R."/>
        </authorList>
    </citation>
    <scope>NUCLEOTIDE SEQUENCE [LARGE SCALE GENOMIC DNA]</scope>
    <source>
        <strain>Challis / ATCC 35105 / BCRC 15272 / CH1 / DL1 / V288</strain>
    </source>
</reference>
<organism>
    <name type="scientific">Streptococcus gordonii (strain Challis / ATCC 35105 / BCRC 15272 / CH1 / DL1 / V288)</name>
    <dbReference type="NCBI Taxonomy" id="467705"/>
    <lineage>
        <taxon>Bacteria</taxon>
        <taxon>Bacillati</taxon>
        <taxon>Bacillota</taxon>
        <taxon>Bacilli</taxon>
        <taxon>Lactobacillales</taxon>
        <taxon>Streptococcaceae</taxon>
        <taxon>Streptococcus</taxon>
    </lineage>
</organism>
<keyword id="KW-0067">ATP-binding</keyword>
<keyword id="KW-0963">Cytoplasm</keyword>
<keyword id="KW-0418">Kinase</keyword>
<keyword id="KW-0545">Nucleotide biosynthesis</keyword>
<keyword id="KW-0547">Nucleotide-binding</keyword>
<keyword id="KW-1185">Reference proteome</keyword>
<keyword id="KW-0808">Transferase</keyword>
<feature type="chain" id="PRO_1000078293" description="Adenylate kinase">
    <location>
        <begin position="1"/>
        <end position="212"/>
    </location>
</feature>
<feature type="region of interest" description="NMP" evidence="1">
    <location>
        <begin position="30"/>
        <end position="59"/>
    </location>
</feature>
<feature type="region of interest" description="LID" evidence="1">
    <location>
        <begin position="127"/>
        <end position="159"/>
    </location>
</feature>
<feature type="binding site" evidence="1">
    <location>
        <begin position="10"/>
        <end position="15"/>
    </location>
    <ligand>
        <name>ATP</name>
        <dbReference type="ChEBI" id="CHEBI:30616"/>
    </ligand>
</feature>
<feature type="binding site" evidence="1">
    <location>
        <position position="31"/>
    </location>
    <ligand>
        <name>AMP</name>
        <dbReference type="ChEBI" id="CHEBI:456215"/>
    </ligand>
</feature>
<feature type="binding site" evidence="1">
    <location>
        <position position="36"/>
    </location>
    <ligand>
        <name>AMP</name>
        <dbReference type="ChEBI" id="CHEBI:456215"/>
    </ligand>
</feature>
<feature type="binding site" evidence="1">
    <location>
        <begin position="57"/>
        <end position="59"/>
    </location>
    <ligand>
        <name>AMP</name>
        <dbReference type="ChEBI" id="CHEBI:456215"/>
    </ligand>
</feature>
<feature type="binding site" evidence="1">
    <location>
        <begin position="86"/>
        <end position="89"/>
    </location>
    <ligand>
        <name>AMP</name>
        <dbReference type="ChEBI" id="CHEBI:456215"/>
    </ligand>
</feature>
<feature type="binding site" evidence="1">
    <location>
        <position position="93"/>
    </location>
    <ligand>
        <name>AMP</name>
        <dbReference type="ChEBI" id="CHEBI:456215"/>
    </ligand>
</feature>
<feature type="binding site" evidence="1">
    <location>
        <position position="128"/>
    </location>
    <ligand>
        <name>ATP</name>
        <dbReference type="ChEBI" id="CHEBI:30616"/>
    </ligand>
</feature>
<feature type="binding site" evidence="1">
    <location>
        <begin position="137"/>
        <end position="138"/>
    </location>
    <ligand>
        <name>ATP</name>
        <dbReference type="ChEBI" id="CHEBI:30616"/>
    </ligand>
</feature>
<feature type="binding site" evidence="1">
    <location>
        <position position="156"/>
    </location>
    <ligand>
        <name>AMP</name>
        <dbReference type="ChEBI" id="CHEBI:456215"/>
    </ligand>
</feature>
<feature type="binding site" evidence="1">
    <location>
        <position position="167"/>
    </location>
    <ligand>
        <name>AMP</name>
        <dbReference type="ChEBI" id="CHEBI:456215"/>
    </ligand>
</feature>
<feature type="binding site" evidence="1">
    <location>
        <position position="195"/>
    </location>
    <ligand>
        <name>ATP</name>
        <dbReference type="ChEBI" id="CHEBI:30616"/>
    </ligand>
</feature>
<name>KAD_STRGC</name>
<evidence type="ECO:0000255" key="1">
    <source>
        <dbReference type="HAMAP-Rule" id="MF_00235"/>
    </source>
</evidence>
<comment type="function">
    <text evidence="1">Catalyzes the reversible transfer of the terminal phosphate group between ATP and AMP. Plays an important role in cellular energy homeostasis and in adenine nucleotide metabolism.</text>
</comment>
<comment type="catalytic activity">
    <reaction evidence="1">
        <text>AMP + ATP = 2 ADP</text>
        <dbReference type="Rhea" id="RHEA:12973"/>
        <dbReference type="ChEBI" id="CHEBI:30616"/>
        <dbReference type="ChEBI" id="CHEBI:456215"/>
        <dbReference type="ChEBI" id="CHEBI:456216"/>
        <dbReference type="EC" id="2.7.4.3"/>
    </reaction>
</comment>
<comment type="pathway">
    <text evidence="1">Purine metabolism; AMP biosynthesis via salvage pathway; AMP from ADP: step 1/1.</text>
</comment>
<comment type="subunit">
    <text evidence="1">Monomer.</text>
</comment>
<comment type="subcellular location">
    <subcellularLocation>
        <location evidence="1">Cytoplasm</location>
    </subcellularLocation>
</comment>
<comment type="domain">
    <text evidence="1">Consists of three domains, a large central CORE domain and two small peripheral domains, NMPbind and LID, which undergo movements during catalysis. The LID domain closes over the site of phosphoryl transfer upon ATP binding. Assembling and dissambling the active center during each catalytic cycle provides an effective means to prevent ATP hydrolysis.</text>
</comment>
<comment type="similarity">
    <text evidence="1">Belongs to the adenylate kinase family.</text>
</comment>
<sequence>MNLLIMGLPGAGKGTQAAKIVEKFKVAHISTGDMFRAAMANQTEMGVLAKSYIDKGELVPDEVTNGIVKERLSQEDIKETGFLLDGYPRTIDQAHALDAILKDLGIDLDGVINIEVDPSCLLERLSGRIIHRQTGETFHKVFNPPANYNEEDYYQREDDKPETVKRRLDVNIAQGEPILSHYREQNLVHDIQGNQDINDVFSDIEKVLEKLK</sequence>
<proteinExistence type="inferred from homology"/>
<gene>
    <name evidence="1" type="primary">adk</name>
    <name type="ordered locus">SGO_1964</name>
</gene>